<protein>
    <recommendedName>
        <fullName>Protein FLUORESCENT IN BLUE LIGHT, chloroplastic</fullName>
    </recommendedName>
</protein>
<comment type="function">
    <text evidence="2 3 4 5">Negative regulator of tetrapyrrole biosynthesis (including chlorophyll) in chloroplasts, probably via HEMA1 repression. Inhibits especially the magnesium ion Mg(2+) branch of tetrapyrrole biosynthesis, but independently of heme.</text>
</comment>
<comment type="subunit">
    <text evidence="4 7">Part of the FLU-containing chloroplast membrane complex composed of FLU, CRD1, PORB, PORC, CHLP and HEMA1. Interacts with HEMA1 (via C-terminus) only in the absence of light. No interaction with HEMA2.</text>
</comment>
<comment type="interaction">
    <interactant intactId="EBI-2319882">
        <id>Q940U6</id>
    </interactant>
    <interactant intactId="EBI-7632098">
        <id>Q9M591</id>
        <label>CRD1</label>
    </interactant>
    <organismsDiffer>false</organismsDiffer>
    <experiments>5</experiments>
</comment>
<comment type="interaction">
    <interactant intactId="EBI-2319882">
        <id>Q940U6</id>
    </interactant>
    <interactant intactId="EBI-2319900">
        <id>P42804</id>
        <label>HEMA1</label>
    </interactant>
    <organismsDiffer>false</organismsDiffer>
    <experiments>3</experiments>
</comment>
<comment type="subcellular location">
    <subcellularLocation>
        <location evidence="6">Plastid</location>
        <location evidence="6">Chloroplast membrane</location>
        <topology>Single-pass membrane protein</topology>
    </subcellularLocation>
    <subcellularLocation>
        <location>Plastid</location>
        <location>Chloroplast thylakoid membrane</location>
        <topology>Single-pass membrane protein</topology>
    </subcellularLocation>
</comment>
<comment type="alternative products">
    <event type="alternative splicing"/>
    <isoform>
        <id>Q940U6-1</id>
        <name>1</name>
        <sequence type="displayed"/>
    </isoform>
    <text>A number of isoforms are produced. According to EST sequences.</text>
</comment>
<comment type="disruption phenotype">
    <text evidence="2 3 4 5">Loss of ability to restrict the accumulation of protochloro-phyllide (Pchlide) and delta-amin-olevulinic acid (ALA) in the dark, leading to a strong Pchlide fluorescence in etiolated mutant seedlings exposed to blue light. Rapid bleaching and death of plants transferred from the dark to the light, mediated by singlet oxygen production and enzymatic peroxidation of linolenic acid.</text>
</comment>
<comment type="sequence caution" evidence="8">
    <conflict type="erroneous gene model prediction">
        <sequence resource="EMBL-CDS" id="BAB02975"/>
    </conflict>
</comment>
<organism>
    <name type="scientific">Arabidopsis thaliana</name>
    <name type="common">Mouse-ear cress</name>
    <dbReference type="NCBI Taxonomy" id="3702"/>
    <lineage>
        <taxon>Eukaryota</taxon>
        <taxon>Viridiplantae</taxon>
        <taxon>Streptophyta</taxon>
        <taxon>Embryophyta</taxon>
        <taxon>Tracheophyta</taxon>
        <taxon>Spermatophyta</taxon>
        <taxon>Magnoliopsida</taxon>
        <taxon>eudicotyledons</taxon>
        <taxon>Gunneridae</taxon>
        <taxon>Pentapetalae</taxon>
        <taxon>rosids</taxon>
        <taxon>malvids</taxon>
        <taxon>Brassicales</taxon>
        <taxon>Brassicaceae</taxon>
        <taxon>Camelineae</taxon>
        <taxon>Arabidopsis</taxon>
    </lineage>
</organism>
<evidence type="ECO:0000255" key="1"/>
<evidence type="ECO:0000269" key="2">
    <source>
    </source>
</evidence>
<evidence type="ECO:0000269" key="3">
    <source>
    </source>
</evidence>
<evidence type="ECO:0000269" key="4">
    <source>
    </source>
</evidence>
<evidence type="ECO:0000269" key="5">
    <source>
    </source>
</evidence>
<evidence type="ECO:0000269" key="6">
    <source>
    </source>
</evidence>
<evidence type="ECO:0000269" key="7">
    <source>
    </source>
</evidence>
<evidence type="ECO:0000305" key="8"/>
<evidence type="ECO:0007829" key="9">
    <source>
        <dbReference type="PDB" id="4YVO"/>
    </source>
</evidence>
<feature type="transit peptide" description="Chloroplast" evidence="1">
    <location>
        <begin position="1"/>
        <end position="26"/>
    </location>
</feature>
<feature type="chain" id="PRO_0000407552" description="Protein FLUORESCENT IN BLUE LIGHT, chloroplastic">
    <location>
        <begin position="27"/>
        <end position="316"/>
    </location>
</feature>
<feature type="transmembrane region" description="Helical" evidence="1">
    <location>
        <begin position="125"/>
        <end position="145"/>
    </location>
</feature>
<feature type="repeat" description="TPR 1">
    <location>
        <begin position="203"/>
        <end position="236"/>
    </location>
</feature>
<feature type="repeat" description="TPR 2">
    <location>
        <begin position="243"/>
        <end position="276"/>
    </location>
</feature>
<feature type="repeat" description="TPR 3">
    <location>
        <begin position="283"/>
        <end position="316"/>
    </location>
</feature>
<feature type="coiled-coil region" evidence="1">
    <location>
        <begin position="144"/>
        <end position="175"/>
    </location>
</feature>
<feature type="mutagenesis site" description="In flu1-4; rapid bleaching and death when transferred from the dark to the light, accumulation of Pchlide and ALA." evidence="2">
    <original>A</original>
    <variation>V</variation>
    <location>
        <position position="146"/>
    </location>
</feature>
<feature type="mutagenesis site" description="In flu1-1; rapid bleaching and death when transferred from the dark to the light, accumulation of Pchlide and ALA, and impaired HEMA1 interaction." evidence="2 4">
    <original>A</original>
    <variation>V</variation>
    <location>
        <position position="262"/>
    </location>
</feature>
<feature type="sequence conflict" description="In Ref. 5; BAH20437." evidence="8" ref="5">
    <original>M</original>
    <variation>L</variation>
    <location>
        <position position="97"/>
    </location>
</feature>
<feature type="helix" evidence="9">
    <location>
        <begin position="199"/>
        <end position="215"/>
    </location>
</feature>
<feature type="helix" evidence="9">
    <location>
        <begin position="219"/>
        <end position="235"/>
    </location>
</feature>
<feature type="helix" evidence="9">
    <location>
        <begin position="239"/>
        <end position="255"/>
    </location>
</feature>
<feature type="helix" evidence="9">
    <location>
        <begin position="259"/>
        <end position="276"/>
    </location>
</feature>
<feature type="helix" evidence="9">
    <location>
        <begin position="282"/>
        <end position="295"/>
    </location>
</feature>
<feature type="helix" evidence="9">
    <location>
        <begin position="299"/>
        <end position="313"/>
    </location>
</feature>
<proteinExistence type="evidence at protein level"/>
<keyword id="KW-0002">3D-structure</keyword>
<keyword id="KW-0025">Alternative splicing</keyword>
<keyword id="KW-0150">Chloroplast</keyword>
<keyword id="KW-0175">Coiled coil</keyword>
<keyword id="KW-0472">Membrane</keyword>
<keyword id="KW-0934">Plastid</keyword>
<keyword id="KW-1185">Reference proteome</keyword>
<keyword id="KW-0677">Repeat</keyword>
<keyword id="KW-0793">Thylakoid</keyword>
<keyword id="KW-0802">TPR repeat</keyword>
<keyword id="KW-0809">Transit peptide</keyword>
<keyword id="KW-0812">Transmembrane</keyword>
<keyword id="KW-1133">Transmembrane helix</keyword>
<accession>Q940U6</accession>
<accession>B9DI70</accession>
<accession>Q9LJH7</accession>
<reference key="1">
    <citation type="journal article" date="2000" name="DNA Res.">
        <title>Structural analysis of Arabidopsis thaliana chromosome 3. II. Sequence features of the 4,251,695 bp regions covered by 90 P1, TAC and BAC clones.</title>
        <authorList>
            <person name="Kaneko T."/>
            <person name="Katoh T."/>
            <person name="Sato S."/>
            <person name="Nakamura Y."/>
            <person name="Asamizu E."/>
            <person name="Tabata S."/>
        </authorList>
    </citation>
    <scope>NUCLEOTIDE SEQUENCE [LARGE SCALE GENOMIC DNA]</scope>
    <source>
        <strain>cv. Columbia</strain>
    </source>
</reference>
<reference key="2">
    <citation type="journal article" date="2017" name="Plant J.">
        <title>Araport11: a complete reannotation of the Arabidopsis thaliana reference genome.</title>
        <authorList>
            <person name="Cheng C.Y."/>
            <person name="Krishnakumar V."/>
            <person name="Chan A.P."/>
            <person name="Thibaud-Nissen F."/>
            <person name="Schobel S."/>
            <person name="Town C.D."/>
        </authorList>
    </citation>
    <scope>GENOME REANNOTATION</scope>
    <source>
        <strain>cv. Columbia</strain>
    </source>
</reference>
<reference key="3">
    <citation type="journal article" date="2003" name="Science">
        <title>Empirical analysis of transcriptional activity in the Arabidopsis genome.</title>
        <authorList>
            <person name="Yamada K."/>
            <person name="Lim J."/>
            <person name="Dale J.M."/>
            <person name="Chen H."/>
            <person name="Shinn P."/>
            <person name="Palm C.J."/>
            <person name="Southwick A.M."/>
            <person name="Wu H.C."/>
            <person name="Kim C.J."/>
            <person name="Nguyen M."/>
            <person name="Pham P.K."/>
            <person name="Cheuk R.F."/>
            <person name="Karlin-Newmann G."/>
            <person name="Liu S.X."/>
            <person name="Lam B."/>
            <person name="Sakano H."/>
            <person name="Wu T."/>
            <person name="Yu G."/>
            <person name="Miranda M."/>
            <person name="Quach H.L."/>
            <person name="Tripp M."/>
            <person name="Chang C.H."/>
            <person name="Lee J.M."/>
            <person name="Toriumi M.J."/>
            <person name="Chan M.M."/>
            <person name="Tang C.C."/>
            <person name="Onodera C.S."/>
            <person name="Deng J.M."/>
            <person name="Akiyama K."/>
            <person name="Ansari Y."/>
            <person name="Arakawa T."/>
            <person name="Banh J."/>
            <person name="Banno F."/>
            <person name="Bowser L."/>
            <person name="Brooks S.Y."/>
            <person name="Carninci P."/>
            <person name="Chao Q."/>
            <person name="Choy N."/>
            <person name="Enju A."/>
            <person name="Goldsmith A.D."/>
            <person name="Gurjal M."/>
            <person name="Hansen N.F."/>
            <person name="Hayashizaki Y."/>
            <person name="Johnson-Hopson C."/>
            <person name="Hsuan V.W."/>
            <person name="Iida K."/>
            <person name="Karnes M."/>
            <person name="Khan S."/>
            <person name="Koesema E."/>
            <person name="Ishida J."/>
            <person name="Jiang P.X."/>
            <person name="Jones T."/>
            <person name="Kawai J."/>
            <person name="Kamiya A."/>
            <person name="Meyers C."/>
            <person name="Nakajima M."/>
            <person name="Narusaka M."/>
            <person name="Seki M."/>
            <person name="Sakurai T."/>
            <person name="Satou M."/>
            <person name="Tamse R."/>
            <person name="Vaysberg M."/>
            <person name="Wallender E.K."/>
            <person name="Wong C."/>
            <person name="Yamamura Y."/>
            <person name="Yuan S."/>
            <person name="Shinozaki K."/>
            <person name="Davis R.W."/>
            <person name="Theologis A."/>
            <person name="Ecker J.R."/>
        </authorList>
    </citation>
    <scope>NUCLEOTIDE SEQUENCE [LARGE SCALE MRNA] (ISOFORM 1)</scope>
    <source>
        <strain>cv. Columbia</strain>
    </source>
</reference>
<reference key="4">
    <citation type="submission" date="2002-03" db="EMBL/GenBank/DDBJ databases">
        <title>Full-length cDNA from Arabidopsis thaliana.</title>
        <authorList>
            <person name="Brover V.V."/>
            <person name="Troukhan M.E."/>
            <person name="Alexandrov N.A."/>
            <person name="Lu Y.-P."/>
            <person name="Flavell R.B."/>
            <person name="Feldmann K.A."/>
        </authorList>
    </citation>
    <scope>NUCLEOTIDE SEQUENCE [LARGE SCALE MRNA] (ISOFORM 1)</scope>
</reference>
<reference key="5">
    <citation type="journal article" date="2009" name="DNA Res.">
        <title>Analysis of multiple occurrences of alternative splicing events in Arabidopsis thaliana using novel sequenced full-length cDNAs.</title>
        <authorList>
            <person name="Iida K."/>
            <person name="Fukami-Kobayashi K."/>
            <person name="Toyoda A."/>
            <person name="Sakaki Y."/>
            <person name="Kobayashi M."/>
            <person name="Seki M."/>
            <person name="Shinozaki K."/>
        </authorList>
    </citation>
    <scope>NUCLEOTIDE SEQUENCE [LARGE SCALE MRNA] OF 97-316 (ISOFORM 1)</scope>
    <source>
        <strain>cv. Columbia</strain>
        <tissue>Flower</tissue>
        <tissue>Silique</tissue>
    </source>
</reference>
<reference key="6">
    <citation type="journal article" date="2001" name="Proc. Natl. Acad. Sci. U.S.A.">
        <title>FLU: a negative regulator of chlorophyll biosynthesis in Arabidopsis thaliana.</title>
        <authorList>
            <person name="Meskauskiene R."/>
            <person name="Nater M."/>
            <person name="Goslings D."/>
            <person name="Kessler F."/>
            <person name="op den Camp R.G.L."/>
            <person name="Apel K."/>
        </authorList>
    </citation>
    <scope>FUNCTION</scope>
    <scope>DISRUPTION PHENOTYPE</scope>
    <scope>MUTAGENESIS OF ALA-146 AND ALA-262</scope>
    <scope>SUBCELLULAR LOCATION</scope>
    <source>
        <strain>cv. Landsberg erecta</strain>
    </source>
</reference>
<reference key="7">
    <citation type="journal article" date="2003" name="Plant Cell">
        <title>Rapid induction of distinct stress responses after the release of singlet oxygen in Arabidopsis.</title>
        <authorList>
            <person name="op den Camp R.G.L."/>
            <person name="Przybyla D."/>
            <person name="Ochsenbein C."/>
            <person name="Laloi C."/>
            <person name="Kim C."/>
            <person name="Danon A."/>
            <person name="Wagner D."/>
            <person name="Hideg E."/>
            <person name="Goebel C."/>
            <person name="Feussner I."/>
            <person name="Nater M."/>
            <person name="Apel K."/>
        </authorList>
    </citation>
    <scope>FUNCTION</scope>
    <scope>DISRUPTION PHENOTYPE</scope>
</reference>
<reference key="8">
    <citation type="journal article" date="2004" name="Plant J.">
        <title>Concurrent interactions of heme and FLU with Glu tRNA reductase (HEMA1), the target of metabolic feedback inhibition of tetrapyrrole biosynthesis, in dark- and light-grown Arabidopsis plants.</title>
        <authorList>
            <person name="Goslings D."/>
            <person name="Meskauskiene R."/>
            <person name="Kim C."/>
            <person name="Lee K.P."/>
            <person name="Nater M."/>
            <person name="Apel K."/>
        </authorList>
    </citation>
    <scope>FUNCTION</scope>
    <scope>DISRUPTION PHENOTYPE</scope>
    <scope>MUTAGENESIS OF ALA-262</scope>
    <scope>INTERACTION WITH HEMA1 AND HEMA2</scope>
    <source>
        <strain>cv. Landsberg erecta</strain>
    </source>
</reference>
<reference key="9">
    <citation type="journal article" date="2008" name="Plant J.">
        <title>Enzymatic, but not non-enzymatic, 1O2-mediated peroxidation of polyunsaturated fatty acids forms part of the EXECUTER1-dependent stress response program in the flu mutant of Arabidopsis thaliana.</title>
        <authorList>
            <person name="Przybyla D."/>
            <person name="Goebel C."/>
            <person name="Imboden A."/>
            <person name="Hamberg M."/>
            <person name="Feussner I."/>
            <person name="Apel K."/>
        </authorList>
    </citation>
    <scope>FUNCTION</scope>
    <scope>DISRUPTION PHENOTYPE</scope>
    <source>
        <strain>cv. Columbia</strain>
    </source>
</reference>
<reference key="10">
    <citation type="journal article" date="2008" name="PLoS ONE">
        <title>Sorting signals, N-terminal modifications and abundance of the chloroplast proteome.</title>
        <authorList>
            <person name="Zybailov B."/>
            <person name="Rutschow H."/>
            <person name="Friso G."/>
            <person name="Rudella A."/>
            <person name="Emanuelsson O."/>
            <person name="Sun Q."/>
            <person name="van Wijk K.J."/>
        </authorList>
    </citation>
    <scope>IDENTIFICATION BY MASS SPECTROMETRY</scope>
    <scope>SUBCELLULAR LOCATION [LARGE SCALE ANALYSIS]</scope>
</reference>
<reference key="11">
    <citation type="journal article" date="2012" name="FEBS Lett.">
        <title>FLU, a negative feedback regulator of tetrapyrrole biosynthesis, is physically linked to the final steps of the Mg(++)-branch of this pathway.</title>
        <authorList>
            <person name="Kauss D."/>
            <person name="Bischof S."/>
            <person name="Steiner S."/>
            <person name="Apel K."/>
            <person name="Meskauskiene R."/>
        </authorList>
    </citation>
    <scope>SUBCELLULAR LOCATION</scope>
    <scope>IDENTIFICATION IN THE FLU-CONTAINING CHLOROPLAST MEMBRANE COMPLEX</scope>
</reference>
<dbReference type="EMBL" id="AP000600">
    <property type="protein sequence ID" value="BAB02975.1"/>
    <property type="status" value="ALT_SEQ"/>
    <property type="molecule type" value="Genomic_DNA"/>
</dbReference>
<dbReference type="EMBL" id="CP002686">
    <property type="protein sequence ID" value="AEE75470.1"/>
    <property type="molecule type" value="Genomic_DNA"/>
</dbReference>
<dbReference type="EMBL" id="AF446890">
    <property type="protein sequence ID" value="AAL38623.1"/>
    <property type="molecule type" value="mRNA"/>
</dbReference>
<dbReference type="EMBL" id="AY052677">
    <property type="protein sequence ID" value="AAK96581.1"/>
    <property type="molecule type" value="mRNA"/>
</dbReference>
<dbReference type="EMBL" id="AY087529">
    <property type="protein sequence ID" value="AAM65071.1"/>
    <property type="molecule type" value="mRNA"/>
</dbReference>
<dbReference type="EMBL" id="AK317782">
    <property type="protein sequence ID" value="BAH20437.1"/>
    <property type="molecule type" value="mRNA"/>
</dbReference>
<dbReference type="RefSeq" id="NP_566478.1">
    <molecule id="Q940U6-1"/>
    <property type="nucleotide sequence ID" value="NM_112267.4"/>
</dbReference>
<dbReference type="PDB" id="4YVO">
    <property type="method" value="X-ray"/>
    <property type="resolution" value="1.45 A"/>
    <property type="chains" value="A=189-316"/>
</dbReference>
<dbReference type="PDB" id="4YVQ">
    <property type="method" value="X-ray"/>
    <property type="resolution" value="2.40 A"/>
    <property type="chains" value="C=195-316"/>
</dbReference>
<dbReference type="PDB" id="5CHE">
    <property type="method" value="X-ray"/>
    <property type="resolution" value="3.20 A"/>
    <property type="chains" value="E/F=195-316"/>
</dbReference>
<dbReference type="PDBsum" id="4YVO"/>
<dbReference type="PDBsum" id="4YVQ"/>
<dbReference type="PDBsum" id="5CHE"/>
<dbReference type="SMR" id="Q940U6"/>
<dbReference type="BioGRID" id="5962">
    <property type="interactions" value="1"/>
</dbReference>
<dbReference type="FunCoup" id="Q940U6">
    <property type="interactions" value="1787"/>
</dbReference>
<dbReference type="IntAct" id="Q940U6">
    <property type="interactions" value="5"/>
</dbReference>
<dbReference type="MINT" id="Q940U6"/>
<dbReference type="STRING" id="3702.Q940U6"/>
<dbReference type="PaxDb" id="3702-AT3G14110.3"/>
<dbReference type="ProteomicsDB" id="230523">
    <molecule id="Q940U6-1"/>
</dbReference>
<dbReference type="EnsemblPlants" id="AT3G14110.1">
    <molecule id="Q940U6-1"/>
    <property type="protein sequence ID" value="AT3G14110.1"/>
    <property type="gene ID" value="AT3G14110"/>
</dbReference>
<dbReference type="GeneID" id="820628"/>
<dbReference type="Gramene" id="AT3G14110.1">
    <molecule id="Q940U6-1"/>
    <property type="protein sequence ID" value="AT3G14110.1"/>
    <property type="gene ID" value="AT3G14110"/>
</dbReference>
<dbReference type="KEGG" id="ath:AT3G14110"/>
<dbReference type="Araport" id="AT3G14110"/>
<dbReference type="TAIR" id="AT3G14110">
    <property type="gene designation" value="FLU"/>
</dbReference>
<dbReference type="eggNOG" id="ENOG502QTEG">
    <property type="taxonomic scope" value="Eukaryota"/>
</dbReference>
<dbReference type="InParanoid" id="Q940U6"/>
<dbReference type="OrthoDB" id="286233at2759"/>
<dbReference type="PhylomeDB" id="Q940U6"/>
<dbReference type="EvolutionaryTrace" id="Q940U6"/>
<dbReference type="PRO" id="PR:Q940U6"/>
<dbReference type="Proteomes" id="UP000006548">
    <property type="component" value="Chromosome 3"/>
</dbReference>
<dbReference type="ExpressionAtlas" id="Q940U6">
    <property type="expression patterns" value="baseline and differential"/>
</dbReference>
<dbReference type="GO" id="GO:0031969">
    <property type="term" value="C:chloroplast membrane"/>
    <property type="evidence" value="ECO:0007669"/>
    <property type="project" value="UniProtKB-SubCell"/>
</dbReference>
<dbReference type="GO" id="GO:0009535">
    <property type="term" value="C:chloroplast thylakoid membrane"/>
    <property type="evidence" value="ECO:0007669"/>
    <property type="project" value="UniProtKB-SubCell"/>
</dbReference>
<dbReference type="GO" id="GO:0015995">
    <property type="term" value="P:chlorophyll biosynthetic process"/>
    <property type="evidence" value="ECO:0007669"/>
    <property type="project" value="InterPro"/>
</dbReference>
<dbReference type="Gene3D" id="1.25.40.10">
    <property type="entry name" value="Tetratricopeptide repeat domain"/>
    <property type="match status" value="1"/>
</dbReference>
<dbReference type="InterPro" id="IPR044243">
    <property type="entry name" value="FLU"/>
</dbReference>
<dbReference type="InterPro" id="IPR011990">
    <property type="entry name" value="TPR-like_helical_dom_sf"/>
</dbReference>
<dbReference type="PANTHER" id="PTHR47310">
    <property type="entry name" value="PROTEIN FLUORESCENT IN BLUE LIGHT, CHLOROPLASTIC"/>
    <property type="match status" value="1"/>
</dbReference>
<dbReference type="PANTHER" id="PTHR47310:SF2">
    <property type="entry name" value="PROTEIN FLUORESCENT IN BLUE LIGHT, CHLOROPLASTIC"/>
    <property type="match status" value="1"/>
</dbReference>
<dbReference type="Pfam" id="PF13424">
    <property type="entry name" value="TPR_12"/>
    <property type="match status" value="1"/>
</dbReference>
<dbReference type="SUPFAM" id="SSF48452">
    <property type="entry name" value="TPR-like"/>
    <property type="match status" value="1"/>
</dbReference>
<dbReference type="PROSITE" id="PS50293">
    <property type="entry name" value="TPR_REGION"/>
    <property type="match status" value="1"/>
</dbReference>
<name>FLU_ARATH</name>
<sequence length="316" mass="34587">MAALIRCCSSFSHTSGGQPPPRDKSRAPEIGKFATSIGYSVVRKPGDHPPFSKIIHSSSQPKERQGKGILQTPFASVGSLDKFSAFEGIGRLKLPVMAVLLTNSLQMATPLEALAAEICEPESSMFSMPILLLVALIGATVGGLLARQRKGELQRLNEQLRQINAALRRQAKIESYAPSLSYAPVGARIPDSEIIVEPKKQELISKLKTGKTFLRNQEPEKAYTEFKIALELAQSLKDPTEEKKAARGLGASLQRQGKYREAIQYHSMVLAISKRESEDSGITEAYGAIADCYTELGDLEKAGKFYDTYIARLETD</sequence>
<gene>
    <name type="primary">FLU</name>
    <name type="ordered locus">At3g14110</name>
    <name type="ORF">MAG2.7</name>
</gene>